<reference key="1">
    <citation type="journal article" date="2002" name="Genome Res.">
        <title>The genome of Methanosarcina acetivorans reveals extensive metabolic and physiological diversity.</title>
        <authorList>
            <person name="Galagan J.E."/>
            <person name="Nusbaum C."/>
            <person name="Roy A."/>
            <person name="Endrizzi M.G."/>
            <person name="Macdonald P."/>
            <person name="FitzHugh W."/>
            <person name="Calvo S."/>
            <person name="Engels R."/>
            <person name="Smirnov S."/>
            <person name="Atnoor D."/>
            <person name="Brown A."/>
            <person name="Allen N."/>
            <person name="Naylor J."/>
            <person name="Stange-Thomann N."/>
            <person name="DeArellano K."/>
            <person name="Johnson R."/>
            <person name="Linton L."/>
            <person name="McEwan P."/>
            <person name="McKernan K."/>
            <person name="Talamas J."/>
            <person name="Tirrell A."/>
            <person name="Ye W."/>
            <person name="Zimmer A."/>
            <person name="Barber R.D."/>
            <person name="Cann I."/>
            <person name="Graham D.E."/>
            <person name="Grahame D.A."/>
            <person name="Guss A.M."/>
            <person name="Hedderich R."/>
            <person name="Ingram-Smith C."/>
            <person name="Kuettner H.C."/>
            <person name="Krzycki J.A."/>
            <person name="Leigh J.A."/>
            <person name="Li W."/>
            <person name="Liu J."/>
            <person name="Mukhopadhyay B."/>
            <person name="Reeve J.N."/>
            <person name="Smith K."/>
            <person name="Springer T.A."/>
            <person name="Umayam L.A."/>
            <person name="White O."/>
            <person name="White R.H."/>
            <person name="de Macario E.C."/>
            <person name="Ferry J.G."/>
            <person name="Jarrell K.F."/>
            <person name="Jing H."/>
            <person name="Macario A.J.L."/>
            <person name="Paulsen I.T."/>
            <person name="Pritchett M."/>
            <person name="Sowers K.R."/>
            <person name="Swanson R.V."/>
            <person name="Zinder S.H."/>
            <person name="Lander E."/>
            <person name="Metcalf W.W."/>
            <person name="Birren B."/>
        </authorList>
    </citation>
    <scope>NUCLEOTIDE SEQUENCE [LARGE SCALE GENOMIC DNA]</scope>
    <source>
        <strain>ATCC 35395 / DSM 2834 / JCM 12185 / C2A</strain>
    </source>
</reference>
<feature type="chain" id="PRO_0000153851" description="Ribonuclease P protein component 4">
    <location>
        <begin position="1"/>
        <end position="107"/>
    </location>
</feature>
<feature type="binding site" evidence="1">
    <location>
        <position position="66"/>
    </location>
    <ligand>
        <name>Zn(2+)</name>
        <dbReference type="ChEBI" id="CHEBI:29105"/>
    </ligand>
</feature>
<feature type="binding site" evidence="1">
    <location>
        <position position="69"/>
    </location>
    <ligand>
        <name>Zn(2+)</name>
        <dbReference type="ChEBI" id="CHEBI:29105"/>
    </ligand>
</feature>
<feature type="binding site" evidence="1">
    <location>
        <position position="92"/>
    </location>
    <ligand>
        <name>Zn(2+)</name>
        <dbReference type="ChEBI" id="CHEBI:29105"/>
    </ligand>
</feature>
<feature type="binding site" evidence="1">
    <location>
        <position position="95"/>
    </location>
    <ligand>
        <name>Zn(2+)</name>
        <dbReference type="ChEBI" id="CHEBI:29105"/>
    </ligand>
</feature>
<dbReference type="EC" id="3.1.26.5" evidence="1"/>
<dbReference type="EMBL" id="AE010299">
    <property type="protein sequence ID" value="AAM03743.1"/>
    <property type="molecule type" value="Genomic_DNA"/>
</dbReference>
<dbReference type="RefSeq" id="WP_011020348.1">
    <property type="nucleotide sequence ID" value="NC_003552.1"/>
</dbReference>
<dbReference type="SMR" id="Q8TTY5"/>
<dbReference type="STRING" id="188937.MA_0290"/>
<dbReference type="EnsemblBacteria" id="AAM03743">
    <property type="protein sequence ID" value="AAM03743"/>
    <property type="gene ID" value="MA_0290"/>
</dbReference>
<dbReference type="GeneID" id="1472182"/>
<dbReference type="KEGG" id="mac:MA_0290"/>
<dbReference type="HOGENOM" id="CLU_079140_3_0_2"/>
<dbReference type="InParanoid" id="Q8TTY5"/>
<dbReference type="OrthoDB" id="10058at2157"/>
<dbReference type="PhylomeDB" id="Q8TTY5"/>
<dbReference type="Proteomes" id="UP000002487">
    <property type="component" value="Chromosome"/>
</dbReference>
<dbReference type="GO" id="GO:0005737">
    <property type="term" value="C:cytoplasm"/>
    <property type="evidence" value="ECO:0007669"/>
    <property type="project" value="UniProtKB-SubCell"/>
</dbReference>
<dbReference type="GO" id="GO:0030677">
    <property type="term" value="C:ribonuclease P complex"/>
    <property type="evidence" value="ECO:0007669"/>
    <property type="project" value="UniProtKB-UniRule"/>
</dbReference>
<dbReference type="GO" id="GO:0004526">
    <property type="term" value="F:ribonuclease P activity"/>
    <property type="evidence" value="ECO:0007669"/>
    <property type="project" value="UniProtKB-UniRule"/>
</dbReference>
<dbReference type="GO" id="GO:0008270">
    <property type="term" value="F:zinc ion binding"/>
    <property type="evidence" value="ECO:0007669"/>
    <property type="project" value="UniProtKB-UniRule"/>
</dbReference>
<dbReference type="GO" id="GO:0001682">
    <property type="term" value="P:tRNA 5'-leader removal"/>
    <property type="evidence" value="ECO:0007669"/>
    <property type="project" value="UniProtKB-UniRule"/>
</dbReference>
<dbReference type="Gene3D" id="6.20.50.20">
    <property type="match status" value="1"/>
</dbReference>
<dbReference type="Gene3D" id="1.20.5.420">
    <property type="entry name" value="Immunoglobulin FC, subunit C"/>
    <property type="match status" value="1"/>
</dbReference>
<dbReference type="HAMAP" id="MF_00757">
    <property type="entry name" value="RNase_P_4"/>
    <property type="match status" value="1"/>
</dbReference>
<dbReference type="InterPro" id="IPR016432">
    <property type="entry name" value="RNP4"/>
</dbReference>
<dbReference type="InterPro" id="IPR007175">
    <property type="entry name" value="Rpr2/Snm1/Rpp21"/>
</dbReference>
<dbReference type="PANTHER" id="PTHR14742:SF0">
    <property type="entry name" value="RIBONUCLEASE P PROTEIN SUBUNIT P21"/>
    <property type="match status" value="1"/>
</dbReference>
<dbReference type="PANTHER" id="PTHR14742">
    <property type="entry name" value="RIBONUCLEASE P SUBUNIT P21"/>
    <property type="match status" value="1"/>
</dbReference>
<dbReference type="Pfam" id="PF04032">
    <property type="entry name" value="Rpr2"/>
    <property type="match status" value="1"/>
</dbReference>
<dbReference type="PIRSF" id="PIRSF004878">
    <property type="entry name" value="RNase_P_4"/>
    <property type="match status" value="1"/>
</dbReference>
<sequence>MPKLARKQQKNLIQNIAVQRMQRLFELAKAEFPENPERSRRYVQLIRNISMRNRISIPRDIKSRICKHCYAFLVPGSNARYRLKNGYLVISCEQCGKEMRYPYKKLK</sequence>
<evidence type="ECO:0000255" key="1">
    <source>
        <dbReference type="HAMAP-Rule" id="MF_00757"/>
    </source>
</evidence>
<organism>
    <name type="scientific">Methanosarcina acetivorans (strain ATCC 35395 / DSM 2834 / JCM 12185 / C2A)</name>
    <dbReference type="NCBI Taxonomy" id="188937"/>
    <lineage>
        <taxon>Archaea</taxon>
        <taxon>Methanobacteriati</taxon>
        <taxon>Methanobacteriota</taxon>
        <taxon>Stenosarchaea group</taxon>
        <taxon>Methanomicrobia</taxon>
        <taxon>Methanosarcinales</taxon>
        <taxon>Methanosarcinaceae</taxon>
        <taxon>Methanosarcina</taxon>
    </lineage>
</organism>
<comment type="function">
    <text evidence="1">Part of ribonuclease P, a protein complex that generates mature tRNA molecules by cleaving their 5'-ends.</text>
</comment>
<comment type="catalytic activity">
    <reaction evidence="1">
        <text>Endonucleolytic cleavage of RNA, removing 5'-extranucleotides from tRNA precursor.</text>
        <dbReference type="EC" id="3.1.26.5"/>
    </reaction>
</comment>
<comment type="cofactor">
    <cofactor evidence="1">
        <name>Zn(2+)</name>
        <dbReference type="ChEBI" id="CHEBI:29105"/>
    </cofactor>
    <text evidence="1">Binds 1 zinc ion per subunit.</text>
</comment>
<comment type="subunit">
    <text evidence="1">Consists of a catalytic RNA component and at least 4-5 protein subunits.</text>
</comment>
<comment type="subcellular location">
    <subcellularLocation>
        <location evidence="1">Cytoplasm</location>
    </subcellularLocation>
</comment>
<comment type="similarity">
    <text evidence="1">Belongs to the eukaryotic/archaeal RNase P protein component 4 family.</text>
</comment>
<proteinExistence type="inferred from homology"/>
<name>RNP4_METAC</name>
<accession>Q8TTY5</accession>
<protein>
    <recommendedName>
        <fullName evidence="1">Ribonuclease P protein component 4</fullName>
        <shortName evidence="1">RNase P component 4</shortName>
        <ecNumber evidence="1">3.1.26.5</ecNumber>
    </recommendedName>
    <alternativeName>
        <fullName evidence="1">Rpp21</fullName>
    </alternativeName>
</protein>
<keyword id="KW-0963">Cytoplasm</keyword>
<keyword id="KW-0255">Endonuclease</keyword>
<keyword id="KW-0378">Hydrolase</keyword>
<keyword id="KW-0479">Metal-binding</keyword>
<keyword id="KW-0540">Nuclease</keyword>
<keyword id="KW-1185">Reference proteome</keyword>
<keyword id="KW-0819">tRNA processing</keyword>
<keyword id="KW-0862">Zinc</keyword>
<gene>
    <name evidence="1" type="primary">rnp4</name>
    <name type="ordered locus">MA_0290</name>
</gene>